<sequence>MALKERIGTVVSDKMDKTVVVAVINRYPHPTYKKIVSRTTRYKAHDPENTCVLGDRVKIRETRPLSAHKRWAIEEILNKTSQAKEVKK</sequence>
<evidence type="ECO:0000255" key="1">
    <source>
        <dbReference type="HAMAP-Rule" id="MF_01345"/>
    </source>
</evidence>
<evidence type="ECO:0000305" key="2"/>
<reference key="1">
    <citation type="journal article" date="2007" name="PLoS Genet.">
        <title>Patterns and implications of gene gain and loss in the evolution of Prochlorococcus.</title>
        <authorList>
            <person name="Kettler G.C."/>
            <person name="Martiny A.C."/>
            <person name="Huang K."/>
            <person name="Zucker J."/>
            <person name="Coleman M.L."/>
            <person name="Rodrigue S."/>
            <person name="Chen F."/>
            <person name="Lapidus A."/>
            <person name="Ferriera S."/>
            <person name="Johnson J."/>
            <person name="Steglich C."/>
            <person name="Church G.M."/>
            <person name="Richardson P."/>
            <person name="Chisholm S.W."/>
        </authorList>
    </citation>
    <scope>NUCLEOTIDE SEQUENCE [LARGE SCALE GENOMIC DNA]</scope>
    <source>
        <strain>AS9601</strain>
    </source>
</reference>
<dbReference type="EMBL" id="CP000551">
    <property type="protein sequence ID" value="ABM71039.1"/>
    <property type="molecule type" value="Genomic_DNA"/>
</dbReference>
<dbReference type="RefSeq" id="WP_011819162.1">
    <property type="nucleotide sequence ID" value="NC_008816.1"/>
</dbReference>
<dbReference type="SMR" id="A2BTC8"/>
<dbReference type="STRING" id="146891.A9601_17561"/>
<dbReference type="KEGG" id="pmb:A9601_17561"/>
<dbReference type="eggNOG" id="COG0186">
    <property type="taxonomic scope" value="Bacteria"/>
</dbReference>
<dbReference type="HOGENOM" id="CLU_073626_1_2_3"/>
<dbReference type="OrthoDB" id="9811714at2"/>
<dbReference type="Proteomes" id="UP000002590">
    <property type="component" value="Chromosome"/>
</dbReference>
<dbReference type="GO" id="GO:0022627">
    <property type="term" value="C:cytosolic small ribosomal subunit"/>
    <property type="evidence" value="ECO:0007669"/>
    <property type="project" value="TreeGrafter"/>
</dbReference>
<dbReference type="GO" id="GO:0019843">
    <property type="term" value="F:rRNA binding"/>
    <property type="evidence" value="ECO:0007669"/>
    <property type="project" value="UniProtKB-UniRule"/>
</dbReference>
<dbReference type="GO" id="GO:0003735">
    <property type="term" value="F:structural constituent of ribosome"/>
    <property type="evidence" value="ECO:0007669"/>
    <property type="project" value="InterPro"/>
</dbReference>
<dbReference type="GO" id="GO:0006412">
    <property type="term" value="P:translation"/>
    <property type="evidence" value="ECO:0007669"/>
    <property type="project" value="UniProtKB-UniRule"/>
</dbReference>
<dbReference type="CDD" id="cd00364">
    <property type="entry name" value="Ribosomal_uS17"/>
    <property type="match status" value="1"/>
</dbReference>
<dbReference type="Gene3D" id="2.40.50.140">
    <property type="entry name" value="Nucleic acid-binding proteins"/>
    <property type="match status" value="1"/>
</dbReference>
<dbReference type="HAMAP" id="MF_01345_B">
    <property type="entry name" value="Ribosomal_uS17_B"/>
    <property type="match status" value="1"/>
</dbReference>
<dbReference type="InterPro" id="IPR012340">
    <property type="entry name" value="NA-bd_OB-fold"/>
</dbReference>
<dbReference type="InterPro" id="IPR000266">
    <property type="entry name" value="Ribosomal_uS17"/>
</dbReference>
<dbReference type="InterPro" id="IPR019984">
    <property type="entry name" value="Ribosomal_uS17_bact/chlr"/>
</dbReference>
<dbReference type="InterPro" id="IPR019979">
    <property type="entry name" value="Ribosomal_uS17_CS"/>
</dbReference>
<dbReference type="NCBIfam" id="NF004123">
    <property type="entry name" value="PRK05610.1"/>
    <property type="match status" value="1"/>
</dbReference>
<dbReference type="NCBIfam" id="TIGR03635">
    <property type="entry name" value="uS17_bact"/>
    <property type="match status" value="1"/>
</dbReference>
<dbReference type="PANTHER" id="PTHR10744">
    <property type="entry name" value="40S RIBOSOMAL PROTEIN S11 FAMILY MEMBER"/>
    <property type="match status" value="1"/>
</dbReference>
<dbReference type="PANTHER" id="PTHR10744:SF1">
    <property type="entry name" value="SMALL RIBOSOMAL SUBUNIT PROTEIN US17M"/>
    <property type="match status" value="1"/>
</dbReference>
<dbReference type="Pfam" id="PF00366">
    <property type="entry name" value="Ribosomal_S17"/>
    <property type="match status" value="1"/>
</dbReference>
<dbReference type="PRINTS" id="PR00973">
    <property type="entry name" value="RIBOSOMALS17"/>
</dbReference>
<dbReference type="SUPFAM" id="SSF50249">
    <property type="entry name" value="Nucleic acid-binding proteins"/>
    <property type="match status" value="1"/>
</dbReference>
<dbReference type="PROSITE" id="PS00056">
    <property type="entry name" value="RIBOSOMAL_S17"/>
    <property type="match status" value="1"/>
</dbReference>
<protein>
    <recommendedName>
        <fullName evidence="1">Small ribosomal subunit protein uS17</fullName>
    </recommendedName>
    <alternativeName>
        <fullName evidence="2">30S ribosomal protein S17</fullName>
    </alternativeName>
</protein>
<name>RS17_PROMS</name>
<comment type="function">
    <text evidence="1">One of the primary rRNA binding proteins, it binds specifically to the 5'-end of 16S ribosomal RNA.</text>
</comment>
<comment type="subunit">
    <text evidence="1">Part of the 30S ribosomal subunit.</text>
</comment>
<comment type="similarity">
    <text evidence="1">Belongs to the universal ribosomal protein uS17 family.</text>
</comment>
<accession>A2BTC8</accession>
<proteinExistence type="inferred from homology"/>
<feature type="chain" id="PRO_1000054996" description="Small ribosomal subunit protein uS17">
    <location>
        <begin position="1"/>
        <end position="88"/>
    </location>
</feature>
<organism>
    <name type="scientific">Prochlorococcus marinus (strain AS9601)</name>
    <dbReference type="NCBI Taxonomy" id="146891"/>
    <lineage>
        <taxon>Bacteria</taxon>
        <taxon>Bacillati</taxon>
        <taxon>Cyanobacteriota</taxon>
        <taxon>Cyanophyceae</taxon>
        <taxon>Synechococcales</taxon>
        <taxon>Prochlorococcaceae</taxon>
        <taxon>Prochlorococcus</taxon>
    </lineage>
</organism>
<keyword id="KW-0687">Ribonucleoprotein</keyword>
<keyword id="KW-0689">Ribosomal protein</keyword>
<keyword id="KW-0694">RNA-binding</keyword>
<keyword id="KW-0699">rRNA-binding</keyword>
<gene>
    <name evidence="1" type="primary">rpsQ</name>
    <name evidence="1" type="synonym">rps17</name>
    <name type="ordered locus">A9601_17561</name>
</gene>